<evidence type="ECO:0000250" key="1"/>
<evidence type="ECO:0000256" key="2">
    <source>
        <dbReference type="SAM" id="MobiDB-lite"/>
    </source>
</evidence>
<evidence type="ECO:0000269" key="3">
    <source>
    </source>
</evidence>
<evidence type="ECO:0000305" key="4"/>
<reference key="1">
    <citation type="journal article" date="1993" name="Eur. J. Biochem.">
        <title>PPQ, a novel protein phosphatase containing a Ser + Asn-rich amino-terminal domain, is involved in the regulation of protein synthesis.</title>
        <authorList>
            <person name="Chen M.X."/>
            <person name="Chen Y.H."/>
            <person name="Cohen P.T.W."/>
        </authorList>
    </citation>
    <scope>NUCLEOTIDE SEQUENCE [GENOMIC DNA]</scope>
    <source>
        <strain>ATCC 204508 / S288c</strain>
    </source>
</reference>
<reference key="2">
    <citation type="journal article" date="1994" name="Eur. J. Biochem.">
        <authorList>
            <person name="Chen M.X."/>
            <person name="Chen Y.H."/>
            <person name="Cohen P.T.W."/>
        </authorList>
    </citation>
    <scope>ERRATUM OF PUBMED:8269960</scope>
</reference>
<reference key="3">
    <citation type="journal article" date="1994" name="Genetics">
        <title>The yeast translational allosuppressor, SAL6: a new member of the PP1-like phosphatase family with a long serine-rich N-terminal extension.</title>
        <authorList>
            <person name="Vincent A."/>
            <person name="Newnam G.P."/>
            <person name="Liebman S.W."/>
        </authorList>
    </citation>
    <scope>NUCLEOTIDE SEQUENCE [GENOMIC DNA]</scope>
    <source>
        <strain>S288c / GRF88</strain>
    </source>
</reference>
<reference key="4">
    <citation type="journal article" date="1997" name="Nature">
        <title>The nucleotide sequence of Saccharomyces cerevisiae chromosome XVI.</title>
        <authorList>
            <person name="Bussey H."/>
            <person name="Storms R.K."/>
            <person name="Ahmed A."/>
            <person name="Albermann K."/>
            <person name="Allen E."/>
            <person name="Ansorge W."/>
            <person name="Araujo R."/>
            <person name="Aparicio A."/>
            <person name="Barrell B.G."/>
            <person name="Badcock K."/>
            <person name="Benes V."/>
            <person name="Botstein D."/>
            <person name="Bowman S."/>
            <person name="Brueckner M."/>
            <person name="Carpenter J."/>
            <person name="Cherry J.M."/>
            <person name="Chung E."/>
            <person name="Churcher C.M."/>
            <person name="Coster F."/>
            <person name="Davis K."/>
            <person name="Davis R.W."/>
            <person name="Dietrich F.S."/>
            <person name="Delius H."/>
            <person name="DiPaolo T."/>
            <person name="Dubois E."/>
            <person name="Duesterhoeft A."/>
            <person name="Duncan M."/>
            <person name="Floeth M."/>
            <person name="Fortin N."/>
            <person name="Friesen J.D."/>
            <person name="Fritz C."/>
            <person name="Goffeau A."/>
            <person name="Hall J."/>
            <person name="Hebling U."/>
            <person name="Heumann K."/>
            <person name="Hilbert H."/>
            <person name="Hillier L.W."/>
            <person name="Hunicke-Smith S."/>
            <person name="Hyman R.W."/>
            <person name="Johnston M."/>
            <person name="Kalman S."/>
            <person name="Kleine K."/>
            <person name="Komp C."/>
            <person name="Kurdi O."/>
            <person name="Lashkari D."/>
            <person name="Lew H."/>
            <person name="Lin A."/>
            <person name="Lin D."/>
            <person name="Louis E.J."/>
            <person name="Marathe R."/>
            <person name="Messenguy F."/>
            <person name="Mewes H.-W."/>
            <person name="Mirtipati S."/>
            <person name="Moestl D."/>
            <person name="Mueller-Auer S."/>
            <person name="Namath A."/>
            <person name="Nentwich U."/>
            <person name="Oefner P."/>
            <person name="Pearson D."/>
            <person name="Petel F.X."/>
            <person name="Pohl T.M."/>
            <person name="Purnelle B."/>
            <person name="Rajandream M.A."/>
            <person name="Rechmann S."/>
            <person name="Rieger M."/>
            <person name="Riles L."/>
            <person name="Roberts D."/>
            <person name="Schaefer M."/>
            <person name="Scharfe M."/>
            <person name="Scherens B."/>
            <person name="Schramm S."/>
            <person name="Schroeder M."/>
            <person name="Sdicu A.-M."/>
            <person name="Tettelin H."/>
            <person name="Urrestarazu L.A."/>
            <person name="Ushinsky S."/>
            <person name="Vierendeels F."/>
            <person name="Vissers S."/>
            <person name="Voss H."/>
            <person name="Walsh S.V."/>
            <person name="Wambutt R."/>
            <person name="Wang Y."/>
            <person name="Wedler E."/>
            <person name="Wedler H."/>
            <person name="Winnett E."/>
            <person name="Zhong W.-W."/>
            <person name="Zollner A."/>
            <person name="Vo D.H."/>
            <person name="Hani J."/>
        </authorList>
    </citation>
    <scope>NUCLEOTIDE SEQUENCE [LARGE SCALE GENOMIC DNA]</scope>
    <source>
        <strain>ATCC 204508 / S288c</strain>
    </source>
</reference>
<reference key="5">
    <citation type="journal article" date="2014" name="G3 (Bethesda)">
        <title>The reference genome sequence of Saccharomyces cerevisiae: Then and now.</title>
        <authorList>
            <person name="Engel S.R."/>
            <person name="Dietrich F.S."/>
            <person name="Fisk D.G."/>
            <person name="Binkley G."/>
            <person name="Balakrishnan R."/>
            <person name="Costanzo M.C."/>
            <person name="Dwight S.S."/>
            <person name="Hitz B.C."/>
            <person name="Karra K."/>
            <person name="Nash R.S."/>
            <person name="Weng S."/>
            <person name="Wong E.D."/>
            <person name="Lloyd P."/>
            <person name="Skrzypek M.S."/>
            <person name="Miyasato S.R."/>
            <person name="Simison M."/>
            <person name="Cherry J.M."/>
        </authorList>
    </citation>
    <scope>GENOME REANNOTATION</scope>
    <source>
        <strain>ATCC 204508 / S288c</strain>
    </source>
</reference>
<reference key="6">
    <citation type="journal article" date="1992" name="FEBS Lett.">
        <title>Polymerase chain reactions using Saccharomyces, Drosophila and human DNA predict a large family of protein serine/threonine phosphatases.</title>
        <authorList>
            <person name="Chen M.X."/>
            <person name="Chen Y.H."/>
            <person name="Cohen P.T.W."/>
        </authorList>
    </citation>
    <scope>NUCLEOTIDE SEQUENCE [GENOMIC DNA] OF 305-328</scope>
</reference>
<reference key="7">
    <citation type="journal article" date="2003" name="Nature">
        <title>Global analysis of protein expression in yeast.</title>
        <authorList>
            <person name="Ghaemmaghami S."/>
            <person name="Huh W.-K."/>
            <person name="Bower K."/>
            <person name="Howson R.W."/>
            <person name="Belle A."/>
            <person name="Dephoure N."/>
            <person name="O'Shea E.K."/>
            <person name="Weissman J.S."/>
        </authorList>
    </citation>
    <scope>LEVEL OF PROTEIN EXPRESSION [LARGE SCALE ANALYSIS]</scope>
</reference>
<reference key="8">
    <citation type="journal article" date="2008" name="Mol. Cell. Proteomics">
        <title>A multidimensional chromatography technology for in-depth phosphoproteome analysis.</title>
        <authorList>
            <person name="Albuquerque C.P."/>
            <person name="Smolka M.B."/>
            <person name="Payne S.H."/>
            <person name="Bafna V."/>
            <person name="Eng J."/>
            <person name="Zhou H."/>
        </authorList>
    </citation>
    <scope>IDENTIFICATION BY MASS SPECTROMETRY [LARGE SCALE ANALYSIS]</scope>
</reference>
<reference key="9">
    <citation type="journal article" date="2009" name="Science">
        <title>Global analysis of Cdk1 substrate phosphorylation sites provides insights into evolution.</title>
        <authorList>
            <person name="Holt L.J."/>
            <person name="Tuch B.B."/>
            <person name="Villen J."/>
            <person name="Johnson A.D."/>
            <person name="Gygi S.P."/>
            <person name="Morgan D.O."/>
        </authorList>
    </citation>
    <scope>IDENTIFICATION BY MASS SPECTROMETRY [LARGE SCALE ANALYSIS]</scope>
</reference>
<proteinExistence type="evidence at protein level"/>
<organism>
    <name type="scientific">Saccharomyces cerevisiae (strain ATCC 204508 / S288c)</name>
    <name type="common">Baker's yeast</name>
    <dbReference type="NCBI Taxonomy" id="559292"/>
    <lineage>
        <taxon>Eukaryota</taxon>
        <taxon>Fungi</taxon>
        <taxon>Dikarya</taxon>
        <taxon>Ascomycota</taxon>
        <taxon>Saccharomycotina</taxon>
        <taxon>Saccharomycetes</taxon>
        <taxon>Saccharomycetales</taxon>
        <taxon>Saccharomycetaceae</taxon>
        <taxon>Saccharomyces</taxon>
    </lineage>
</organism>
<comment type="function">
    <text>Phosphatase involved in the regulation of protein synthesis. Affects translational accuracy.</text>
</comment>
<comment type="catalytic activity">
    <reaction>
        <text>O-phospho-L-seryl-[protein] + H2O = L-seryl-[protein] + phosphate</text>
        <dbReference type="Rhea" id="RHEA:20629"/>
        <dbReference type="Rhea" id="RHEA-COMP:9863"/>
        <dbReference type="Rhea" id="RHEA-COMP:11604"/>
        <dbReference type="ChEBI" id="CHEBI:15377"/>
        <dbReference type="ChEBI" id="CHEBI:29999"/>
        <dbReference type="ChEBI" id="CHEBI:43474"/>
        <dbReference type="ChEBI" id="CHEBI:83421"/>
        <dbReference type="EC" id="3.1.3.16"/>
    </reaction>
</comment>
<comment type="catalytic activity">
    <reaction>
        <text>O-phospho-L-threonyl-[protein] + H2O = L-threonyl-[protein] + phosphate</text>
        <dbReference type="Rhea" id="RHEA:47004"/>
        <dbReference type="Rhea" id="RHEA-COMP:11060"/>
        <dbReference type="Rhea" id="RHEA-COMP:11605"/>
        <dbReference type="ChEBI" id="CHEBI:15377"/>
        <dbReference type="ChEBI" id="CHEBI:30013"/>
        <dbReference type="ChEBI" id="CHEBI:43474"/>
        <dbReference type="ChEBI" id="CHEBI:61977"/>
        <dbReference type="EC" id="3.1.3.16"/>
    </reaction>
</comment>
<comment type="cofactor">
    <cofactor evidence="1">
        <name>Mn(2+)</name>
        <dbReference type="ChEBI" id="CHEBI:29035"/>
    </cofactor>
    <text evidence="1">Binds 2 manganese ions per subunit.</text>
</comment>
<comment type="interaction">
    <interactant intactId="EBI-13787">
        <id>P32945</id>
    </interactant>
    <interactant intactId="EBI-16783">
        <id>P36047</id>
        <label>SDS22</label>
    </interactant>
    <organismsDiffer>false</organismsDiffer>
    <experiments>4</experiments>
</comment>
<comment type="miscellaneous">
    <text evidence="3">Present with 319 molecules/cell in log phase SD medium.</text>
</comment>
<comment type="similarity">
    <text evidence="4">Belongs to the PPP phosphatase family. PP-Z subfamily.</text>
</comment>
<gene>
    <name type="primary">PPQ1</name>
    <name type="synonym">SAL6</name>
    <name type="ordered locus">YPL179W</name>
</gene>
<keyword id="KW-0378">Hydrolase</keyword>
<keyword id="KW-0464">Manganese</keyword>
<keyword id="KW-0479">Metal-binding</keyword>
<keyword id="KW-0904">Protein phosphatase</keyword>
<keyword id="KW-1185">Reference proteome</keyword>
<name>PPQ1_YEAST</name>
<dbReference type="EC" id="3.1.3.16"/>
<dbReference type="EMBL" id="X75485">
    <property type="protein sequence ID" value="CAA53214.1"/>
    <property type="molecule type" value="Genomic_DNA"/>
</dbReference>
<dbReference type="EMBL" id="U00795">
    <property type="protein sequence ID" value="AAC48924.1"/>
    <property type="molecule type" value="Genomic_DNA"/>
</dbReference>
<dbReference type="EMBL" id="Z73535">
    <property type="protein sequence ID" value="CAA97886.1"/>
    <property type="molecule type" value="Genomic_DNA"/>
</dbReference>
<dbReference type="EMBL" id="S39958">
    <property type="protein sequence ID" value="AAB22461.1"/>
    <property type="molecule type" value="Genomic_DNA"/>
</dbReference>
<dbReference type="EMBL" id="BK006949">
    <property type="protein sequence ID" value="DAA11255.1"/>
    <property type="molecule type" value="Genomic_DNA"/>
</dbReference>
<dbReference type="PIR" id="S39533">
    <property type="entry name" value="S39533"/>
</dbReference>
<dbReference type="RefSeq" id="NP_015146.1">
    <property type="nucleotide sequence ID" value="NM_001183993.1"/>
</dbReference>
<dbReference type="SMR" id="P32945"/>
<dbReference type="BioGRID" id="36003">
    <property type="interactions" value="171"/>
</dbReference>
<dbReference type="DIP" id="DIP-5504N"/>
<dbReference type="FunCoup" id="P32945">
    <property type="interactions" value="228"/>
</dbReference>
<dbReference type="IntAct" id="P32945">
    <property type="interactions" value="4"/>
</dbReference>
<dbReference type="MINT" id="P32945"/>
<dbReference type="STRING" id="4932.YPL179W"/>
<dbReference type="iPTMnet" id="P32945"/>
<dbReference type="PaxDb" id="4932-YPL179W"/>
<dbReference type="PeptideAtlas" id="P32945"/>
<dbReference type="EnsemblFungi" id="YPL179W_mRNA">
    <property type="protein sequence ID" value="YPL179W"/>
    <property type="gene ID" value="YPL179W"/>
</dbReference>
<dbReference type="GeneID" id="855923"/>
<dbReference type="KEGG" id="sce:YPL179W"/>
<dbReference type="AGR" id="SGD:S000006100"/>
<dbReference type="SGD" id="S000006100">
    <property type="gene designation" value="PPQ1"/>
</dbReference>
<dbReference type="VEuPathDB" id="FungiDB:YPL179W"/>
<dbReference type="eggNOG" id="KOG0374">
    <property type="taxonomic scope" value="Eukaryota"/>
</dbReference>
<dbReference type="HOGENOM" id="CLU_004962_4_1_1"/>
<dbReference type="InParanoid" id="P32945"/>
<dbReference type="OMA" id="EVQLICA"/>
<dbReference type="OrthoDB" id="1930084at2759"/>
<dbReference type="BioCyc" id="YEAST:G3O-34074-MONOMER"/>
<dbReference type="BioGRID-ORCS" id="855923">
    <property type="hits" value="5 hits in 10 CRISPR screens"/>
</dbReference>
<dbReference type="PRO" id="PR:P32945"/>
<dbReference type="Proteomes" id="UP000002311">
    <property type="component" value="Chromosome XVI"/>
</dbReference>
<dbReference type="RNAct" id="P32945">
    <property type="molecule type" value="protein"/>
</dbReference>
<dbReference type="GO" id="GO:0005737">
    <property type="term" value="C:cytoplasm"/>
    <property type="evidence" value="ECO:0007005"/>
    <property type="project" value="SGD"/>
</dbReference>
<dbReference type="GO" id="GO:0005634">
    <property type="term" value="C:nucleus"/>
    <property type="evidence" value="ECO:0000318"/>
    <property type="project" value="GO_Central"/>
</dbReference>
<dbReference type="GO" id="GO:0046872">
    <property type="term" value="F:metal ion binding"/>
    <property type="evidence" value="ECO:0007669"/>
    <property type="project" value="UniProtKB-KW"/>
</dbReference>
<dbReference type="GO" id="GO:0004721">
    <property type="term" value="F:phosphoprotein phosphatase activity"/>
    <property type="evidence" value="ECO:0000314"/>
    <property type="project" value="SGD"/>
</dbReference>
<dbReference type="GO" id="GO:0004722">
    <property type="term" value="F:protein serine/threonine phosphatase activity"/>
    <property type="evidence" value="ECO:0000318"/>
    <property type="project" value="GO_Central"/>
</dbReference>
<dbReference type="GO" id="GO:0007059">
    <property type="term" value="P:chromosome segregation"/>
    <property type="evidence" value="ECO:0000318"/>
    <property type="project" value="GO_Central"/>
</dbReference>
<dbReference type="GO" id="GO:0090029">
    <property type="term" value="P:negative regulation of pheromone-dependent signal transduction involved in conjugation with cellular fusion"/>
    <property type="evidence" value="ECO:0000315"/>
    <property type="project" value="SGD"/>
</dbReference>
<dbReference type="GO" id="GO:0007346">
    <property type="term" value="P:regulation of mitotic cell cycle"/>
    <property type="evidence" value="ECO:0000318"/>
    <property type="project" value="GO_Central"/>
</dbReference>
<dbReference type="CDD" id="cd07414">
    <property type="entry name" value="MPP_PP1_PPKL"/>
    <property type="match status" value="1"/>
</dbReference>
<dbReference type="FunFam" id="3.60.21.10:FF:000026">
    <property type="entry name" value="Serine/threonine-protein phosphatase"/>
    <property type="match status" value="1"/>
</dbReference>
<dbReference type="Gene3D" id="3.60.21.10">
    <property type="match status" value="1"/>
</dbReference>
<dbReference type="InterPro" id="IPR004843">
    <property type="entry name" value="Calcineurin-like_PHP_ApaH"/>
</dbReference>
<dbReference type="InterPro" id="IPR029052">
    <property type="entry name" value="Metallo-depent_PP-like"/>
</dbReference>
<dbReference type="InterPro" id="IPR050341">
    <property type="entry name" value="PP1_catalytic_subunit"/>
</dbReference>
<dbReference type="InterPro" id="IPR011159">
    <property type="entry name" value="PPPtase_PPZ/Ppq1"/>
</dbReference>
<dbReference type="InterPro" id="IPR006186">
    <property type="entry name" value="Ser/Thr-sp_prot-phosphatase"/>
</dbReference>
<dbReference type="InterPro" id="IPR031675">
    <property type="entry name" value="STPPase_N"/>
</dbReference>
<dbReference type="PANTHER" id="PTHR11668">
    <property type="entry name" value="SERINE/THREONINE PROTEIN PHOSPHATASE"/>
    <property type="match status" value="1"/>
</dbReference>
<dbReference type="PANTHER" id="PTHR11668:SF423">
    <property type="entry name" value="SERINE_THREONINE-PROTEIN PHOSPHATASE PPQ"/>
    <property type="match status" value="1"/>
</dbReference>
<dbReference type="Pfam" id="PF00149">
    <property type="entry name" value="Metallophos"/>
    <property type="match status" value="1"/>
</dbReference>
<dbReference type="Pfam" id="PF16891">
    <property type="entry name" value="STPPase_N"/>
    <property type="match status" value="1"/>
</dbReference>
<dbReference type="PIRSF" id="PIRSF000909">
    <property type="entry name" value="PPPtase_PPZ"/>
    <property type="match status" value="1"/>
</dbReference>
<dbReference type="PRINTS" id="PR00114">
    <property type="entry name" value="STPHPHTASE"/>
</dbReference>
<dbReference type="SMART" id="SM00156">
    <property type="entry name" value="PP2Ac"/>
    <property type="match status" value="1"/>
</dbReference>
<dbReference type="SUPFAM" id="SSF56300">
    <property type="entry name" value="Metallo-dependent phosphatases"/>
    <property type="match status" value="1"/>
</dbReference>
<dbReference type="PROSITE" id="PS00125">
    <property type="entry name" value="SER_THR_PHOSPHATASE"/>
    <property type="match status" value="1"/>
</dbReference>
<feature type="chain" id="PRO_0000058893" description="Serine/threonine-protein phosphatase PPQ">
    <location>
        <begin position="1"/>
        <end position="549"/>
    </location>
</feature>
<feature type="region of interest" description="Disordered" evidence="2">
    <location>
        <begin position="1"/>
        <end position="50"/>
    </location>
</feature>
<feature type="region of interest" description="Disordered" evidence="2">
    <location>
        <begin position="64"/>
        <end position="85"/>
    </location>
</feature>
<feature type="region of interest" description="Disordered" evidence="2">
    <location>
        <begin position="133"/>
        <end position="158"/>
    </location>
</feature>
<feature type="region of interest" description="Disordered" evidence="2">
    <location>
        <begin position="189"/>
        <end position="219"/>
    </location>
</feature>
<feature type="compositionally biased region" description="Polar residues" evidence="2">
    <location>
        <begin position="1"/>
        <end position="13"/>
    </location>
</feature>
<feature type="compositionally biased region" description="Low complexity" evidence="2">
    <location>
        <begin position="16"/>
        <end position="32"/>
    </location>
</feature>
<feature type="compositionally biased region" description="Low complexity" evidence="2">
    <location>
        <begin position="68"/>
        <end position="83"/>
    </location>
</feature>
<feature type="compositionally biased region" description="Polar residues" evidence="2">
    <location>
        <begin position="205"/>
        <end position="217"/>
    </location>
</feature>
<feature type="active site" description="Proton donor" evidence="1">
    <location>
        <position position="362"/>
    </location>
</feature>
<feature type="binding site" evidence="1">
    <location>
        <position position="301"/>
    </location>
    <ligand>
        <name>Mn(2+)</name>
        <dbReference type="ChEBI" id="CHEBI:29035"/>
        <label>1</label>
    </ligand>
</feature>
<feature type="binding site" evidence="1">
    <location>
        <position position="303"/>
    </location>
    <ligand>
        <name>Mn(2+)</name>
        <dbReference type="ChEBI" id="CHEBI:29035"/>
        <label>1</label>
    </ligand>
</feature>
<feature type="binding site" evidence="1">
    <location>
        <position position="329"/>
    </location>
    <ligand>
        <name>Mn(2+)</name>
        <dbReference type="ChEBI" id="CHEBI:29035"/>
        <label>1</label>
    </ligand>
</feature>
<feature type="binding site" evidence="1">
    <location>
        <position position="329"/>
    </location>
    <ligand>
        <name>Mn(2+)</name>
        <dbReference type="ChEBI" id="CHEBI:29035"/>
        <label>2</label>
    </ligand>
</feature>
<feature type="binding site" evidence="1">
    <location>
        <position position="361"/>
    </location>
    <ligand>
        <name>Mn(2+)</name>
        <dbReference type="ChEBI" id="CHEBI:29035"/>
        <label>2</label>
    </ligand>
</feature>
<feature type="binding site" evidence="1">
    <location>
        <position position="410"/>
    </location>
    <ligand>
        <name>Mn(2+)</name>
        <dbReference type="ChEBI" id="CHEBI:29035"/>
        <label>2</label>
    </ligand>
</feature>
<feature type="binding site" evidence="1">
    <location>
        <position position="485"/>
    </location>
    <ligand>
        <name>Mn(2+)</name>
        <dbReference type="ChEBI" id="CHEBI:29035"/>
        <label>2</label>
    </ligand>
</feature>
<protein>
    <recommendedName>
        <fullName>Serine/threonine-protein phosphatase PPQ</fullName>
        <ecNumber>3.1.3.16</ecNumber>
    </recommendedName>
</protein>
<sequence>MRRSPSRSNNNFAVPNCSTNSNSSQQQLTTPSDDLNSNEPNDPDDSRSLPTIKKFNNKHSINNYNTLASAGKNNNNKRASNDNLLIPGENAHKQKIYTKDENLKSLYLDIDVSVAKALSSSATAPKLINTARTSSTTTATTSNNILTSPSYRESNYSSPSSYSFSSYYSSATSASSSTSSFLKSSGLSSRVKSPSSSVKAGSFGAPSSPTSGIPNPKSSKKPIFLRRYSHDTSSNEGLDIDVAIEKLLQVGESREITKTSKKKNFPFHSWEIQLICYHAREIFLNQPTLLRLQAPIKVVGDVHGQFNDLLRILKLSGVPSDTNYLFLGDYVDRGKNSLETILLLLCYKIKYKDNFFMLRGNHESANVTKMYGFYDECKRRLSSKVWKMFVDVFNTLPLAAIIQDKIFCVHGGISPDLHDMKQIEKVARPTDIPESGLVTDLLWSDPDPQVTDWSENDRGVSYTFSKRNVLDFCAKFKFDLILRGHMVVEDGYEFFARKKFVTIFSAPNYCGEFHNWGAVMSVTTGMMCSFELLKPRALKNKKKLYKTKV</sequence>
<accession>P32945</accession>
<accession>D6W3I9</accession>